<sequence>MFALSKVLRRSQSLRLGACNAVYSKLDIPLGERNIAIESNALIHDKHEALPRFYELSWSSSTGRRSLSSDAGAKTTGDDDDLEDKNVDLATPDETSSDSEDGEEFSGDEGDIEGAELELHVPESKRPSEMFKAIVSVSGLSVGSALDKWVEQGKDTNRKEFESAMLQLRKRRMFGRALQMTEWLDENKQFEMEERDYACRLDLISKVRGWYKGEAYIKTIPESFRGELVYRTLLANHVATSNVRTAEAVFNKMKDLGFPLSTFTCNQMLILYKRVDKKKIADVLLLLEKENLKPNLNTYKILIDTKGSSNDITGMEQIVETMKSEGVELDLRARALIARHYASAGLKEKAEKVLKEMEGESLEENRHMCKDLLSVYGYLQREDEVRRVWKICEENPRYNEVLAAILAFGKIDKVKDAEAVFEKVLKMSHRVSSNVYSVLLRVYVDHKMVSEGKDLVKQMSDSGCNIGALTWDAVIKLYVEAGEVEKAESSLSKAIQSKQIKPLMSSFMYLMHEYVRRGDVHNTEKIFQRMKQAGYQSRFWAYQTLIQAYVNAKAPAYGMKERMKADNIFPNKRLAAQLAKADPFKKTPLSDLLD</sequence>
<gene>
    <name type="ordered locus">At1g15480</name>
    <name type="ORF">F9L1.43</name>
</gene>
<comment type="subcellular location">
    <subcellularLocation>
        <location evidence="3">Mitochondrion</location>
    </subcellularLocation>
</comment>
<comment type="similarity">
    <text evidence="3">Belongs to the PPR family. P subfamily.</text>
</comment>
<comment type="sequence caution" evidence="3">
    <conflict type="erroneous gene model prediction">
        <sequence resource="EMBL-CDS" id="AAD39676"/>
    </conflict>
</comment>
<comment type="online information" name="Pentatricopeptide repeat proteins">
    <link uri="https://ppr.plantenergy.uwa.edu.au"/>
</comment>
<feature type="transit peptide" description="Mitochondrion" evidence="1">
    <location>
        <begin position="1"/>
        <end position="67"/>
    </location>
</feature>
<feature type="chain" id="PRO_0000342785" description="Pentatricopeptide repeat-containing protein At1g15480, mitochondrial">
    <location>
        <begin position="68"/>
        <end position="594"/>
    </location>
</feature>
<feature type="repeat" description="PPR 1">
    <location>
        <begin position="226"/>
        <end position="260"/>
    </location>
</feature>
<feature type="repeat" description="PPR 2">
    <location>
        <begin position="261"/>
        <end position="294"/>
    </location>
</feature>
<feature type="repeat" description="PPR 3">
    <location>
        <begin position="295"/>
        <end position="329"/>
    </location>
</feature>
<feature type="repeat" description="PPR 4">
    <location>
        <begin position="330"/>
        <end position="364"/>
    </location>
</feature>
<feature type="repeat" description="PPR 5">
    <location>
        <begin position="432"/>
        <end position="466"/>
    </location>
</feature>
<feature type="repeat" description="PPR 6">
    <location>
        <begin position="467"/>
        <end position="502"/>
    </location>
</feature>
<feature type="repeat" description="PPR 7">
    <location>
        <begin position="503"/>
        <end position="537"/>
    </location>
</feature>
<feature type="region of interest" description="Disordered" evidence="2">
    <location>
        <begin position="62"/>
        <end position="109"/>
    </location>
</feature>
<feature type="compositionally biased region" description="Low complexity" evidence="2">
    <location>
        <begin position="62"/>
        <end position="75"/>
    </location>
</feature>
<feature type="compositionally biased region" description="Acidic residues" evidence="2">
    <location>
        <begin position="95"/>
        <end position="109"/>
    </location>
</feature>
<protein>
    <recommendedName>
        <fullName>Pentatricopeptide repeat-containing protein At1g15480, mitochondrial</fullName>
    </recommendedName>
</protein>
<proteinExistence type="evidence at transcript level"/>
<evidence type="ECO:0000255" key="1"/>
<evidence type="ECO:0000256" key="2">
    <source>
        <dbReference type="SAM" id="MobiDB-lite"/>
    </source>
</evidence>
<evidence type="ECO:0000305" key="3"/>
<dbReference type="EMBL" id="AC007591">
    <property type="protein sequence ID" value="AAD39676.1"/>
    <property type="status" value="ALT_SEQ"/>
    <property type="molecule type" value="Genomic_DNA"/>
</dbReference>
<dbReference type="EMBL" id="CP002684">
    <property type="protein sequence ID" value="AEE29328.1"/>
    <property type="molecule type" value="Genomic_DNA"/>
</dbReference>
<dbReference type="RefSeq" id="NP_173001.2">
    <property type="nucleotide sequence ID" value="NM_101417.4"/>
</dbReference>
<dbReference type="SMR" id="Q9XI21"/>
<dbReference type="FunCoup" id="Q9XI21">
    <property type="interactions" value="500"/>
</dbReference>
<dbReference type="STRING" id="3702.Q9XI21"/>
<dbReference type="iPTMnet" id="Q9XI21"/>
<dbReference type="PaxDb" id="3702-AT1G15480.1"/>
<dbReference type="ProteomicsDB" id="226404"/>
<dbReference type="EnsemblPlants" id="AT1G15480.1">
    <property type="protein sequence ID" value="AT1G15480.1"/>
    <property type="gene ID" value="AT1G15480"/>
</dbReference>
<dbReference type="GeneID" id="838118"/>
<dbReference type="Gramene" id="AT1G15480.1">
    <property type="protein sequence ID" value="AT1G15480.1"/>
    <property type="gene ID" value="AT1G15480"/>
</dbReference>
<dbReference type="KEGG" id="ath:AT1G15480"/>
<dbReference type="Araport" id="AT1G15480"/>
<dbReference type="TAIR" id="AT1G15480">
    <property type="gene designation" value="POCO1"/>
</dbReference>
<dbReference type="eggNOG" id="KOG4197">
    <property type="taxonomic scope" value="Eukaryota"/>
</dbReference>
<dbReference type="HOGENOM" id="CLU_019802_1_0_1"/>
<dbReference type="InParanoid" id="Q9XI21"/>
<dbReference type="OMA" id="YELSWSS"/>
<dbReference type="PhylomeDB" id="Q9XI21"/>
<dbReference type="CD-CODE" id="4299E36E">
    <property type="entry name" value="Nucleolus"/>
</dbReference>
<dbReference type="PRO" id="PR:Q9XI21"/>
<dbReference type="Proteomes" id="UP000006548">
    <property type="component" value="Chromosome 1"/>
</dbReference>
<dbReference type="ExpressionAtlas" id="Q9XI21">
    <property type="expression patterns" value="baseline and differential"/>
</dbReference>
<dbReference type="GO" id="GO:0005739">
    <property type="term" value="C:mitochondrion"/>
    <property type="evidence" value="ECO:0000314"/>
    <property type="project" value="TAIR"/>
</dbReference>
<dbReference type="GO" id="GO:0003729">
    <property type="term" value="F:mRNA binding"/>
    <property type="evidence" value="ECO:0000314"/>
    <property type="project" value="TAIR"/>
</dbReference>
<dbReference type="GO" id="GO:0080156">
    <property type="term" value="P:mitochondrial mRNA modification"/>
    <property type="evidence" value="ECO:0000315"/>
    <property type="project" value="TAIR"/>
</dbReference>
<dbReference type="FunFam" id="1.25.40.10:FF:000394">
    <property type="entry name" value="Pentatricopeptide repeat-containing protein, mitochondrial"/>
    <property type="match status" value="1"/>
</dbReference>
<dbReference type="FunFam" id="1.25.40.10:FF:000744">
    <property type="entry name" value="Pentatricopeptide repeat-containing protein, mitochondrial"/>
    <property type="match status" value="1"/>
</dbReference>
<dbReference type="Gene3D" id="1.25.40.10">
    <property type="entry name" value="Tetratricopeptide repeat domain"/>
    <property type="match status" value="2"/>
</dbReference>
<dbReference type="InterPro" id="IPR002885">
    <property type="entry name" value="Pentatricopeptide_rpt"/>
</dbReference>
<dbReference type="InterPro" id="IPR011990">
    <property type="entry name" value="TPR-like_helical_dom_sf"/>
</dbReference>
<dbReference type="NCBIfam" id="TIGR00756">
    <property type="entry name" value="PPR"/>
    <property type="match status" value="1"/>
</dbReference>
<dbReference type="PANTHER" id="PTHR45717:SF41">
    <property type="entry name" value="BNAA06G10190D PROTEIN"/>
    <property type="match status" value="1"/>
</dbReference>
<dbReference type="PANTHER" id="PTHR45717">
    <property type="entry name" value="OS12G0527900 PROTEIN"/>
    <property type="match status" value="1"/>
</dbReference>
<dbReference type="Pfam" id="PF01535">
    <property type="entry name" value="PPR"/>
    <property type="match status" value="3"/>
</dbReference>
<dbReference type="Pfam" id="PF13812">
    <property type="entry name" value="PPR_3"/>
    <property type="match status" value="2"/>
</dbReference>
<dbReference type="PROSITE" id="PS51375">
    <property type="entry name" value="PPR"/>
    <property type="match status" value="6"/>
</dbReference>
<reference key="1">
    <citation type="journal article" date="2000" name="Nature">
        <title>Sequence and analysis of chromosome 1 of the plant Arabidopsis thaliana.</title>
        <authorList>
            <person name="Theologis A."/>
            <person name="Ecker J.R."/>
            <person name="Palm C.J."/>
            <person name="Federspiel N.A."/>
            <person name="Kaul S."/>
            <person name="White O."/>
            <person name="Alonso J."/>
            <person name="Altafi H."/>
            <person name="Araujo R."/>
            <person name="Bowman C.L."/>
            <person name="Brooks S.Y."/>
            <person name="Buehler E."/>
            <person name="Chan A."/>
            <person name="Chao Q."/>
            <person name="Chen H."/>
            <person name="Cheuk R.F."/>
            <person name="Chin C.W."/>
            <person name="Chung M.K."/>
            <person name="Conn L."/>
            <person name="Conway A.B."/>
            <person name="Conway A.R."/>
            <person name="Creasy T.H."/>
            <person name="Dewar K."/>
            <person name="Dunn P."/>
            <person name="Etgu P."/>
            <person name="Feldblyum T.V."/>
            <person name="Feng J.-D."/>
            <person name="Fong B."/>
            <person name="Fujii C.Y."/>
            <person name="Gill J.E."/>
            <person name="Goldsmith A.D."/>
            <person name="Haas B."/>
            <person name="Hansen N.F."/>
            <person name="Hughes B."/>
            <person name="Huizar L."/>
            <person name="Hunter J.L."/>
            <person name="Jenkins J."/>
            <person name="Johnson-Hopson C."/>
            <person name="Khan S."/>
            <person name="Khaykin E."/>
            <person name="Kim C.J."/>
            <person name="Koo H.L."/>
            <person name="Kremenetskaia I."/>
            <person name="Kurtz D.B."/>
            <person name="Kwan A."/>
            <person name="Lam B."/>
            <person name="Langin-Hooper S."/>
            <person name="Lee A."/>
            <person name="Lee J.M."/>
            <person name="Lenz C.A."/>
            <person name="Li J.H."/>
            <person name="Li Y.-P."/>
            <person name="Lin X."/>
            <person name="Liu S.X."/>
            <person name="Liu Z.A."/>
            <person name="Luros J.S."/>
            <person name="Maiti R."/>
            <person name="Marziali A."/>
            <person name="Militscher J."/>
            <person name="Miranda M."/>
            <person name="Nguyen M."/>
            <person name="Nierman W.C."/>
            <person name="Osborne B.I."/>
            <person name="Pai G."/>
            <person name="Peterson J."/>
            <person name="Pham P.K."/>
            <person name="Rizzo M."/>
            <person name="Rooney T."/>
            <person name="Rowley D."/>
            <person name="Sakano H."/>
            <person name="Salzberg S.L."/>
            <person name="Schwartz J.R."/>
            <person name="Shinn P."/>
            <person name="Southwick A.M."/>
            <person name="Sun H."/>
            <person name="Tallon L.J."/>
            <person name="Tambunga G."/>
            <person name="Toriumi M.J."/>
            <person name="Town C.D."/>
            <person name="Utterback T."/>
            <person name="Van Aken S."/>
            <person name="Vaysberg M."/>
            <person name="Vysotskaia V.S."/>
            <person name="Walker M."/>
            <person name="Wu D."/>
            <person name="Yu G."/>
            <person name="Fraser C.M."/>
            <person name="Venter J.C."/>
            <person name="Davis R.W."/>
        </authorList>
    </citation>
    <scope>NUCLEOTIDE SEQUENCE [LARGE SCALE GENOMIC DNA]</scope>
    <source>
        <strain>cv. Columbia</strain>
    </source>
</reference>
<reference key="2">
    <citation type="journal article" date="2017" name="Plant J.">
        <title>Araport11: a complete reannotation of the Arabidopsis thaliana reference genome.</title>
        <authorList>
            <person name="Cheng C.Y."/>
            <person name="Krishnakumar V."/>
            <person name="Chan A.P."/>
            <person name="Thibaud-Nissen F."/>
            <person name="Schobel S."/>
            <person name="Town C.D."/>
        </authorList>
    </citation>
    <scope>GENOME REANNOTATION</scope>
    <source>
        <strain>cv. Columbia</strain>
    </source>
</reference>
<reference key="3">
    <citation type="journal article" date="2004" name="Plant Cell">
        <title>Genome-wide analysis of Arabidopsis pentatricopeptide repeat proteins reveals their essential role in organelle biogenesis.</title>
        <authorList>
            <person name="Lurin C."/>
            <person name="Andres C."/>
            <person name="Aubourg S."/>
            <person name="Bellaoui M."/>
            <person name="Bitton F."/>
            <person name="Bruyere C."/>
            <person name="Caboche M."/>
            <person name="Debast C."/>
            <person name="Gualberto J."/>
            <person name="Hoffmann B."/>
            <person name="Lecharny A."/>
            <person name="Le Ret M."/>
            <person name="Martin-Magniette M.-L."/>
            <person name="Mireau H."/>
            <person name="Peeters N."/>
            <person name="Renou J.-P."/>
            <person name="Szurek B."/>
            <person name="Taconnat L."/>
            <person name="Small I."/>
        </authorList>
    </citation>
    <scope>GENE FAMILY</scope>
</reference>
<name>PPR44_ARATH</name>
<keyword id="KW-0496">Mitochondrion</keyword>
<keyword id="KW-1185">Reference proteome</keyword>
<keyword id="KW-0677">Repeat</keyword>
<keyword id="KW-0809">Transit peptide</keyword>
<accession>Q9XI21</accession>
<organism>
    <name type="scientific">Arabidopsis thaliana</name>
    <name type="common">Mouse-ear cress</name>
    <dbReference type="NCBI Taxonomy" id="3702"/>
    <lineage>
        <taxon>Eukaryota</taxon>
        <taxon>Viridiplantae</taxon>
        <taxon>Streptophyta</taxon>
        <taxon>Embryophyta</taxon>
        <taxon>Tracheophyta</taxon>
        <taxon>Spermatophyta</taxon>
        <taxon>Magnoliopsida</taxon>
        <taxon>eudicotyledons</taxon>
        <taxon>Gunneridae</taxon>
        <taxon>Pentapetalae</taxon>
        <taxon>rosids</taxon>
        <taxon>malvids</taxon>
        <taxon>Brassicales</taxon>
        <taxon>Brassicaceae</taxon>
        <taxon>Camelineae</taxon>
        <taxon>Arabidopsis</taxon>
    </lineage>
</organism>